<protein>
    <recommendedName>
        <fullName>Tetraketide alpha-pyrone reductase 1</fullName>
        <ecNumber>1.1.1.-</ecNumber>
    </recommendedName>
    <alternativeName>
        <fullName>Protein DIHYDROFLAVONOL 4-REDUCTASE-LIKE 1</fullName>
    </alternativeName>
</protein>
<reference key="1">
    <citation type="journal article" date="1999" name="Nature">
        <title>Sequence and analysis of chromosome 4 of the plant Arabidopsis thaliana.</title>
        <authorList>
            <person name="Mayer K.F.X."/>
            <person name="Schueller C."/>
            <person name="Wambutt R."/>
            <person name="Murphy G."/>
            <person name="Volckaert G."/>
            <person name="Pohl T."/>
            <person name="Duesterhoeft A."/>
            <person name="Stiekema W."/>
            <person name="Entian K.-D."/>
            <person name="Terryn N."/>
            <person name="Harris B."/>
            <person name="Ansorge W."/>
            <person name="Brandt P."/>
            <person name="Grivell L.A."/>
            <person name="Rieger M."/>
            <person name="Weichselgartner M."/>
            <person name="de Simone V."/>
            <person name="Obermaier B."/>
            <person name="Mache R."/>
            <person name="Mueller M."/>
            <person name="Kreis M."/>
            <person name="Delseny M."/>
            <person name="Puigdomenech P."/>
            <person name="Watson M."/>
            <person name="Schmidtheini T."/>
            <person name="Reichert B."/>
            <person name="Portetelle D."/>
            <person name="Perez-Alonso M."/>
            <person name="Boutry M."/>
            <person name="Bancroft I."/>
            <person name="Vos P."/>
            <person name="Hoheisel J."/>
            <person name="Zimmermann W."/>
            <person name="Wedler H."/>
            <person name="Ridley P."/>
            <person name="Langham S.-A."/>
            <person name="McCullagh B."/>
            <person name="Bilham L."/>
            <person name="Robben J."/>
            <person name="van der Schueren J."/>
            <person name="Grymonprez B."/>
            <person name="Chuang Y.-J."/>
            <person name="Vandenbussche F."/>
            <person name="Braeken M."/>
            <person name="Weltjens I."/>
            <person name="Voet M."/>
            <person name="Bastiaens I."/>
            <person name="Aert R."/>
            <person name="Defoor E."/>
            <person name="Weitzenegger T."/>
            <person name="Bothe G."/>
            <person name="Ramsperger U."/>
            <person name="Hilbert H."/>
            <person name="Braun M."/>
            <person name="Holzer E."/>
            <person name="Brandt A."/>
            <person name="Peters S."/>
            <person name="van Staveren M."/>
            <person name="Dirkse W."/>
            <person name="Mooijman P."/>
            <person name="Klein Lankhorst R."/>
            <person name="Rose M."/>
            <person name="Hauf J."/>
            <person name="Koetter P."/>
            <person name="Berneiser S."/>
            <person name="Hempel S."/>
            <person name="Feldpausch M."/>
            <person name="Lamberth S."/>
            <person name="Van den Daele H."/>
            <person name="De Keyser A."/>
            <person name="Buysshaert C."/>
            <person name="Gielen J."/>
            <person name="Villarroel R."/>
            <person name="De Clercq R."/>
            <person name="van Montagu M."/>
            <person name="Rogers J."/>
            <person name="Cronin A."/>
            <person name="Quail M.A."/>
            <person name="Bray-Allen S."/>
            <person name="Clark L."/>
            <person name="Doggett J."/>
            <person name="Hall S."/>
            <person name="Kay M."/>
            <person name="Lennard N."/>
            <person name="McLay K."/>
            <person name="Mayes R."/>
            <person name="Pettett A."/>
            <person name="Rajandream M.A."/>
            <person name="Lyne M."/>
            <person name="Benes V."/>
            <person name="Rechmann S."/>
            <person name="Borkova D."/>
            <person name="Bloecker H."/>
            <person name="Scharfe M."/>
            <person name="Grimm M."/>
            <person name="Loehnert T.-H."/>
            <person name="Dose S."/>
            <person name="de Haan M."/>
            <person name="Maarse A.C."/>
            <person name="Schaefer M."/>
            <person name="Mueller-Auer S."/>
            <person name="Gabel C."/>
            <person name="Fuchs M."/>
            <person name="Fartmann B."/>
            <person name="Granderath K."/>
            <person name="Dauner D."/>
            <person name="Herzl A."/>
            <person name="Neumann S."/>
            <person name="Argiriou A."/>
            <person name="Vitale D."/>
            <person name="Liguori R."/>
            <person name="Piravandi E."/>
            <person name="Massenet O."/>
            <person name="Quigley F."/>
            <person name="Clabauld G."/>
            <person name="Muendlein A."/>
            <person name="Felber R."/>
            <person name="Schnabl S."/>
            <person name="Hiller R."/>
            <person name="Schmidt W."/>
            <person name="Lecharny A."/>
            <person name="Aubourg S."/>
            <person name="Chefdor F."/>
            <person name="Cooke R."/>
            <person name="Berger C."/>
            <person name="Monfort A."/>
            <person name="Casacuberta E."/>
            <person name="Gibbons T."/>
            <person name="Weber N."/>
            <person name="Vandenbol M."/>
            <person name="Bargues M."/>
            <person name="Terol J."/>
            <person name="Torres A."/>
            <person name="Perez-Perez A."/>
            <person name="Purnelle B."/>
            <person name="Bent E."/>
            <person name="Johnson S."/>
            <person name="Tacon D."/>
            <person name="Jesse T."/>
            <person name="Heijnen L."/>
            <person name="Schwarz S."/>
            <person name="Scholler P."/>
            <person name="Heber S."/>
            <person name="Francs P."/>
            <person name="Bielke C."/>
            <person name="Frishman D."/>
            <person name="Haase D."/>
            <person name="Lemcke K."/>
            <person name="Mewes H.-W."/>
            <person name="Stocker S."/>
            <person name="Zaccaria P."/>
            <person name="Bevan M."/>
            <person name="Wilson R.K."/>
            <person name="de la Bastide M."/>
            <person name="Habermann K."/>
            <person name="Parnell L."/>
            <person name="Dedhia N."/>
            <person name="Gnoj L."/>
            <person name="Schutz K."/>
            <person name="Huang E."/>
            <person name="Spiegel L."/>
            <person name="Sekhon M."/>
            <person name="Murray J."/>
            <person name="Sheet P."/>
            <person name="Cordes M."/>
            <person name="Abu-Threideh J."/>
            <person name="Stoneking T."/>
            <person name="Kalicki J."/>
            <person name="Graves T."/>
            <person name="Harmon G."/>
            <person name="Edwards J."/>
            <person name="Latreille P."/>
            <person name="Courtney L."/>
            <person name="Cloud J."/>
            <person name="Abbott A."/>
            <person name="Scott K."/>
            <person name="Johnson D."/>
            <person name="Minx P."/>
            <person name="Bentley D."/>
            <person name="Fulton B."/>
            <person name="Miller N."/>
            <person name="Greco T."/>
            <person name="Kemp K."/>
            <person name="Kramer J."/>
            <person name="Fulton L."/>
            <person name="Mardis E."/>
            <person name="Dante M."/>
            <person name="Pepin K."/>
            <person name="Hillier L.W."/>
            <person name="Nelson J."/>
            <person name="Spieth J."/>
            <person name="Ryan E."/>
            <person name="Andrews S."/>
            <person name="Geisel C."/>
            <person name="Layman D."/>
            <person name="Du H."/>
            <person name="Ali J."/>
            <person name="Berghoff A."/>
            <person name="Jones K."/>
            <person name="Drone K."/>
            <person name="Cotton M."/>
            <person name="Joshu C."/>
            <person name="Antonoiu B."/>
            <person name="Zidanic M."/>
            <person name="Strong C."/>
            <person name="Sun H."/>
            <person name="Lamar B."/>
            <person name="Yordan C."/>
            <person name="Ma P."/>
            <person name="Zhong J."/>
            <person name="Preston R."/>
            <person name="Vil D."/>
            <person name="Shekher M."/>
            <person name="Matero A."/>
            <person name="Shah R."/>
            <person name="Swaby I.K."/>
            <person name="O'Shaughnessy A."/>
            <person name="Rodriguez M."/>
            <person name="Hoffman J."/>
            <person name="Till S."/>
            <person name="Granat S."/>
            <person name="Shohdy N."/>
            <person name="Hasegawa A."/>
            <person name="Hameed A."/>
            <person name="Lodhi M."/>
            <person name="Johnson A."/>
            <person name="Chen E."/>
            <person name="Marra M.A."/>
            <person name="Martienssen R."/>
            <person name="McCombie W.R."/>
        </authorList>
    </citation>
    <scope>NUCLEOTIDE SEQUENCE [LARGE SCALE GENOMIC DNA]</scope>
    <source>
        <strain>cv. Columbia</strain>
    </source>
</reference>
<reference key="2">
    <citation type="journal article" date="2017" name="Plant J.">
        <title>Araport11: a complete reannotation of the Arabidopsis thaliana reference genome.</title>
        <authorList>
            <person name="Cheng C.Y."/>
            <person name="Krishnakumar V."/>
            <person name="Chan A.P."/>
            <person name="Thibaud-Nissen F."/>
            <person name="Schobel S."/>
            <person name="Town C.D."/>
        </authorList>
    </citation>
    <scope>GENOME REANNOTATION</scope>
    <source>
        <strain>cv. Columbia</strain>
    </source>
</reference>
<reference key="3">
    <citation type="submission" date="2006-06" db="EMBL/GenBank/DDBJ databases">
        <title>Arabidopsis ORF clones.</title>
        <authorList>
            <person name="Shinn P."/>
            <person name="Chen H."/>
            <person name="Kim C.J."/>
            <person name="Quinitio C."/>
            <person name="Ecker J.R."/>
        </authorList>
    </citation>
    <scope>NUCLEOTIDE SEQUENCE [LARGE SCALE MRNA]</scope>
    <source>
        <strain>cv. Columbia</strain>
    </source>
</reference>
<reference key="4">
    <citation type="journal article" date="2009" name="New Phytol.">
        <title>An anther-specific dihydroflavonol 4-reductase-like gene (DRL1) is essential for male fertility in Arabidopsis.</title>
        <authorList>
            <person name="Tang L.K."/>
            <person name="Chu H."/>
            <person name="Yip W.K."/>
            <person name="Yeung E.C."/>
            <person name="Lo C."/>
        </authorList>
    </citation>
    <scope>FUNCTION</scope>
    <scope>SUBCELLULAR LOCATION</scope>
    <scope>TISSUE SPECIFICITY</scope>
    <scope>DISRUPTION PHENOTYPE</scope>
</reference>
<reference key="5">
    <citation type="journal article" date="2010" name="Plant Cell">
        <title>Analysis of TETRAKETIDE ?-PYRONE REDUCTASE function in Arabidopsis thaliana reveals a previously unknown, but conserved, biochemical pathway in sporopollenin monomer biosynthesis.</title>
        <authorList>
            <person name="Grienenberger E."/>
            <person name="Kim S.S."/>
            <person name="Lallemand B."/>
            <person name="Geoffroy P."/>
            <person name="Heintz D."/>
            <person name="de Azevedo Souza C."/>
            <person name="Heitz T."/>
            <person name="Douglas C.J."/>
            <person name="Legrand M."/>
        </authorList>
    </citation>
    <scope>FUNCTION</scope>
    <scope>SUBCELLULAR LOCATION</scope>
    <scope>TISSUE SPECIFICITY</scope>
    <scope>DISRUPTION PHENOTYPE</scope>
</reference>
<reference key="6">
    <citation type="journal article" date="2013" name="Plant Physiol.">
        <title>Sporopollenin biosynthetic enzymes interact and constitute a metabolon localized to the endoplasmic reticulum of tapetum cells.</title>
        <authorList>
            <person name="Lallemand B."/>
            <person name="Erhardt M."/>
            <person name="Heitz T."/>
            <person name="Legrand M."/>
        </authorList>
    </citation>
    <scope>SUBCELLULAR LOCATION</scope>
    <scope>TISSUE SPECIFICITY</scope>
    <scope>INTERACTION WITH 4CLL1/ACOS5; PKSA AND PKSB</scope>
</reference>
<keyword id="KW-0963">Cytoplasm</keyword>
<keyword id="KW-0256">Endoplasmic reticulum</keyword>
<keyword id="KW-0521">NADP</keyword>
<keyword id="KW-0539">Nucleus</keyword>
<keyword id="KW-0560">Oxidoreductase</keyword>
<keyword id="KW-1185">Reference proteome</keyword>
<feature type="chain" id="PRO_0000418214" description="Tetraketide alpha-pyrone reductase 1">
    <location>
        <begin position="1"/>
        <end position="326"/>
    </location>
</feature>
<feature type="binding site" evidence="2">
    <location>
        <begin position="8"/>
        <end position="32"/>
    </location>
    <ligand>
        <name>NADP(+)</name>
        <dbReference type="ChEBI" id="CHEBI:58349"/>
    </ligand>
</feature>
<feature type="binding site" evidence="1">
    <location>
        <position position="44"/>
    </location>
    <ligand>
        <name>NADP(+)</name>
        <dbReference type="ChEBI" id="CHEBI:58349"/>
    </ligand>
</feature>
<feature type="binding site" evidence="1">
    <location>
        <position position="162"/>
    </location>
    <ligand>
        <name>NADP(+)</name>
        <dbReference type="ChEBI" id="CHEBI:58349"/>
    </ligand>
</feature>
<proteinExistence type="evidence at protein level"/>
<accession>Q500U8</accession>
<accession>O65487</accession>
<comment type="function">
    <text evidence="3 4">Involved in the biosynthesis of hydroxylated tetraketide compounds that serve as sporopollenin precursors (the main constituents of exine). Is essential for pollen wall development. Acts on tetraketide alpha-pyrones and reduces the carbonyl function on the tetraketide alkyl chain to a secondary alcohol function.</text>
</comment>
<comment type="subunit">
    <text evidence="5">Interacts with 4CLL1/ACOS5, PKSA and PKSB.</text>
</comment>
<comment type="interaction">
    <interactant intactId="EBI-4432350">
        <id>Q500U8</id>
    </interactant>
    <interactant intactId="EBI-30859465">
        <id>Q9LQ12</id>
        <label>4CLL1</label>
    </interactant>
    <organismsDiffer>false</organismsDiffer>
    <experiments>3</experiments>
</comment>
<comment type="interaction">
    <interactant intactId="EBI-4432350">
        <id>Q500U8</id>
    </interactant>
    <interactant intactId="EBI-30859485">
        <id>O23674</id>
        <label>PKSA</label>
    </interactant>
    <organismsDiffer>false</organismsDiffer>
    <experiments>2</experiments>
</comment>
<comment type="interaction">
    <interactant intactId="EBI-4432350">
        <id>Q500U8</id>
    </interactant>
    <interactant intactId="EBI-30859537">
        <id>Q8LDM2</id>
        <label>PKSB</label>
    </interactant>
    <organismsDiffer>false</organismsDiffer>
    <experiments>2</experiments>
</comment>
<comment type="subcellular location">
    <subcellularLocation>
        <location>Cytoplasm</location>
    </subcellularLocation>
    <subcellularLocation>
        <location>Nucleus</location>
    </subcellularLocation>
    <subcellularLocation>
        <location evidence="5">Endoplasmic reticulum</location>
    </subcellularLocation>
    <text>According to PubMed:21193572, TKPR1 is associated with the endoplasmic reticulum.</text>
</comment>
<comment type="tissue specificity">
    <text evidence="3 4 5">Specifically expressed in anther tapetal cells during microspores development.</text>
</comment>
<comment type="disruption phenotype">
    <text evidence="3 4">Male sterility due to distorted pollen grains lacking reticulate exine pattern.</text>
</comment>
<comment type="similarity">
    <text evidence="6">Belongs to the NAD(P)-dependent epimerase/dehydratase family. Dihydroflavonol-4-reductase subfamily.</text>
</comment>
<comment type="sequence caution" evidence="6">
    <conflict type="erroneous gene model prediction">
        <sequence resource="EMBL-CDS" id="CAA18727"/>
    </conflict>
</comment>
<comment type="sequence caution" evidence="6">
    <conflict type="erroneous gene model prediction">
        <sequence resource="EMBL-CDS" id="CAB80259"/>
    </conflict>
</comment>
<sequence>MDQAKGKVCVTGASGFLASWLVKRLLLEGYEVIGTVRDPGNEKKLAHLWKLEGAKERLRLVKADLMEEGSFDNAIMGCQGVFHTASPVLKPTSNPEEEILRPAIEGTLNVLRSCRKNPSLKRVVLTSSSSTVRIRDDFDPKIPLDESIWTSVELCKRFQVWYALSKTLAEQAAWKFSEENGIDLVTVLPSFLVGPSLPPDLCSTASDVLGLLKGETEKFQWHGQMGYVHIDDVARTHIVVFEHEAAQGRYICSSNVISLEELVSFLSARYPSLPIPKRFEKLNRLHYDFDTSKIQSLGLKFKSLEEMFDDCIASLVEQGYLSTVLP</sequence>
<name>TKPR1_ARATH</name>
<gene>
    <name type="primary">TKPR1</name>
    <name type="synonym">DRL1</name>
    <name type="ordered locus">At4g35420</name>
    <name type="ORF">F23E12.20</name>
</gene>
<evidence type="ECO:0000250" key="1">
    <source>
        <dbReference type="UniProtKB" id="A0A059TC02"/>
    </source>
</evidence>
<evidence type="ECO:0000255" key="2"/>
<evidence type="ECO:0000269" key="3">
    <source>
    </source>
</evidence>
<evidence type="ECO:0000269" key="4">
    <source>
    </source>
</evidence>
<evidence type="ECO:0000269" key="5">
    <source>
    </source>
</evidence>
<evidence type="ECO:0000305" key="6"/>
<organism>
    <name type="scientific">Arabidopsis thaliana</name>
    <name type="common">Mouse-ear cress</name>
    <dbReference type="NCBI Taxonomy" id="3702"/>
    <lineage>
        <taxon>Eukaryota</taxon>
        <taxon>Viridiplantae</taxon>
        <taxon>Streptophyta</taxon>
        <taxon>Embryophyta</taxon>
        <taxon>Tracheophyta</taxon>
        <taxon>Spermatophyta</taxon>
        <taxon>Magnoliopsida</taxon>
        <taxon>eudicotyledons</taxon>
        <taxon>Gunneridae</taxon>
        <taxon>Pentapetalae</taxon>
        <taxon>rosids</taxon>
        <taxon>malvids</taxon>
        <taxon>Brassicales</taxon>
        <taxon>Brassicaceae</taxon>
        <taxon>Camelineae</taxon>
        <taxon>Arabidopsis</taxon>
    </lineage>
</organism>
<dbReference type="EC" id="1.1.1.-"/>
<dbReference type="EMBL" id="AL022604">
    <property type="protein sequence ID" value="CAA18727.1"/>
    <property type="status" value="ALT_SEQ"/>
    <property type="molecule type" value="Genomic_DNA"/>
</dbReference>
<dbReference type="EMBL" id="AL161587">
    <property type="protein sequence ID" value="CAB80259.1"/>
    <property type="status" value="ALT_SEQ"/>
    <property type="molecule type" value="Genomic_DNA"/>
</dbReference>
<dbReference type="EMBL" id="CP002687">
    <property type="protein sequence ID" value="AEE86509.1"/>
    <property type="molecule type" value="Genomic_DNA"/>
</dbReference>
<dbReference type="EMBL" id="BT022119">
    <property type="protein sequence ID" value="AAY34180.1"/>
    <property type="molecule type" value="mRNA"/>
</dbReference>
<dbReference type="EMBL" id="BT025661">
    <property type="protein sequence ID" value="ABF74722.1"/>
    <property type="molecule type" value="mRNA"/>
</dbReference>
<dbReference type="PIR" id="T06115">
    <property type="entry name" value="T06115"/>
</dbReference>
<dbReference type="RefSeq" id="NP_195268.2">
    <property type="nucleotide sequence ID" value="NM_119708.3"/>
</dbReference>
<dbReference type="SMR" id="Q500U8"/>
<dbReference type="BioGRID" id="14977">
    <property type="interactions" value="1"/>
</dbReference>
<dbReference type="FunCoup" id="Q500U8">
    <property type="interactions" value="125"/>
</dbReference>
<dbReference type="IntAct" id="Q500U8">
    <property type="interactions" value="5"/>
</dbReference>
<dbReference type="STRING" id="3702.Q500U8"/>
<dbReference type="PaxDb" id="3702-AT4G35420.1"/>
<dbReference type="ProteomicsDB" id="234281"/>
<dbReference type="EnsemblPlants" id="AT4G35420.1">
    <property type="protein sequence ID" value="AT4G35420.1"/>
    <property type="gene ID" value="AT4G35420"/>
</dbReference>
<dbReference type="GeneID" id="829695"/>
<dbReference type="Gramene" id="AT4G35420.1">
    <property type="protein sequence ID" value="AT4G35420.1"/>
    <property type="gene ID" value="AT4G35420"/>
</dbReference>
<dbReference type="KEGG" id="ath:AT4G35420"/>
<dbReference type="Araport" id="AT4G35420"/>
<dbReference type="TAIR" id="AT4G35420">
    <property type="gene designation" value="DRL1"/>
</dbReference>
<dbReference type="eggNOG" id="KOG1502">
    <property type="taxonomic scope" value="Eukaryota"/>
</dbReference>
<dbReference type="HOGENOM" id="CLU_007383_9_0_1"/>
<dbReference type="InParanoid" id="Q500U8"/>
<dbReference type="OMA" id="AWYAMSK"/>
<dbReference type="OrthoDB" id="2735536at2759"/>
<dbReference type="PhylomeDB" id="Q500U8"/>
<dbReference type="BioCyc" id="ARA:AT4G35420-MONOMER"/>
<dbReference type="BioCyc" id="MetaCyc:AT4G35420-MONOMER"/>
<dbReference type="PRO" id="PR:Q500U8"/>
<dbReference type="Proteomes" id="UP000006548">
    <property type="component" value="Chromosome 4"/>
</dbReference>
<dbReference type="ExpressionAtlas" id="Q500U8">
    <property type="expression patterns" value="baseline and differential"/>
</dbReference>
<dbReference type="GO" id="GO:0005783">
    <property type="term" value="C:endoplasmic reticulum"/>
    <property type="evidence" value="ECO:0000314"/>
    <property type="project" value="UniProtKB"/>
</dbReference>
<dbReference type="GO" id="GO:0005634">
    <property type="term" value="C:nucleus"/>
    <property type="evidence" value="ECO:0007669"/>
    <property type="project" value="UniProtKB-SubCell"/>
</dbReference>
<dbReference type="GO" id="GO:0016491">
    <property type="term" value="F:oxidoreductase activity"/>
    <property type="evidence" value="ECO:0007669"/>
    <property type="project" value="UniProtKB-KW"/>
</dbReference>
<dbReference type="GO" id="GO:0009555">
    <property type="term" value="P:pollen development"/>
    <property type="evidence" value="ECO:0000315"/>
    <property type="project" value="TAIR"/>
</dbReference>
<dbReference type="GO" id="GO:0010584">
    <property type="term" value="P:pollen exine formation"/>
    <property type="evidence" value="ECO:0000315"/>
    <property type="project" value="TAIR"/>
</dbReference>
<dbReference type="GO" id="GO:0048316">
    <property type="term" value="P:seed development"/>
    <property type="evidence" value="ECO:0000315"/>
    <property type="project" value="TAIR"/>
</dbReference>
<dbReference type="GO" id="GO:0080110">
    <property type="term" value="P:sporopollenin biosynthetic process"/>
    <property type="evidence" value="ECO:0000315"/>
    <property type="project" value="TAIR"/>
</dbReference>
<dbReference type="CDD" id="cd08958">
    <property type="entry name" value="FR_SDR_e"/>
    <property type="match status" value="1"/>
</dbReference>
<dbReference type="FunFam" id="3.40.50.720:FF:000085">
    <property type="entry name" value="Dihydroflavonol reductase"/>
    <property type="match status" value="1"/>
</dbReference>
<dbReference type="Gene3D" id="3.40.50.720">
    <property type="entry name" value="NAD(P)-binding Rossmann-like Domain"/>
    <property type="match status" value="1"/>
</dbReference>
<dbReference type="InterPro" id="IPR001509">
    <property type="entry name" value="Epimerase_deHydtase"/>
</dbReference>
<dbReference type="InterPro" id="IPR036291">
    <property type="entry name" value="NAD(P)-bd_dom_sf"/>
</dbReference>
<dbReference type="InterPro" id="IPR050425">
    <property type="entry name" value="NAD(P)_dehydrat-like"/>
</dbReference>
<dbReference type="PANTHER" id="PTHR10366">
    <property type="entry name" value="NAD DEPENDENT EPIMERASE/DEHYDRATASE"/>
    <property type="match status" value="1"/>
</dbReference>
<dbReference type="PANTHER" id="PTHR10366:SF821">
    <property type="entry name" value="TETRAKETIDE ALPHA-PYRONE REDUCTASE 1"/>
    <property type="match status" value="1"/>
</dbReference>
<dbReference type="Pfam" id="PF01370">
    <property type="entry name" value="Epimerase"/>
    <property type="match status" value="1"/>
</dbReference>
<dbReference type="SUPFAM" id="SSF51735">
    <property type="entry name" value="NAD(P)-binding Rossmann-fold domains"/>
    <property type="match status" value="1"/>
</dbReference>